<evidence type="ECO:0000250" key="1"/>
<evidence type="ECO:0000255" key="2"/>
<evidence type="ECO:0000305" key="3"/>
<feature type="chain" id="PRO_0000064545" description="Antilisterial bacteriocin subtilosin biosynthesis protein AlbD">
    <location>
        <begin position="1"/>
        <end position="436"/>
    </location>
</feature>
<feature type="transmembrane region" description="Helical" evidence="2">
    <location>
        <begin position="27"/>
        <end position="47"/>
    </location>
</feature>
<feature type="transmembrane region" description="Helical" evidence="2">
    <location>
        <begin position="51"/>
        <end position="71"/>
    </location>
</feature>
<feature type="transmembrane region" description="Helical" evidence="2">
    <location>
        <begin position="112"/>
        <end position="132"/>
    </location>
</feature>
<feature type="transmembrane region" description="Helical" evidence="2">
    <location>
        <begin position="134"/>
        <end position="154"/>
    </location>
</feature>
<feature type="transmembrane region" description="Helical" evidence="2">
    <location>
        <begin position="166"/>
        <end position="186"/>
    </location>
</feature>
<feature type="transmembrane region" description="Helical" evidence="2">
    <location>
        <begin position="187"/>
        <end position="207"/>
    </location>
</feature>
<feature type="transmembrane region" description="Helical" evidence="2">
    <location>
        <begin position="240"/>
        <end position="260"/>
    </location>
</feature>
<feature type="transmembrane region" description="Helical" evidence="2">
    <location>
        <begin position="270"/>
        <end position="290"/>
    </location>
</feature>
<feature type="transmembrane region" description="Helical" evidence="2">
    <location>
        <begin position="315"/>
        <end position="335"/>
    </location>
</feature>
<feature type="transmembrane region" description="Helical" evidence="2">
    <location>
        <begin position="395"/>
        <end position="415"/>
    </location>
</feature>
<proteinExistence type="inferred from homology"/>
<dbReference type="EMBL" id="AJ430547">
    <property type="protein sequence ID" value="CAD23202.1"/>
    <property type="status" value="ALT_INIT"/>
    <property type="molecule type" value="Genomic_DNA"/>
</dbReference>
<dbReference type="STRING" id="483913.AN935_18930"/>
<dbReference type="PATRIC" id="fig|1423.172.peg.2481"/>
<dbReference type="GO" id="GO:0005886">
    <property type="term" value="C:plasma membrane"/>
    <property type="evidence" value="ECO:0007669"/>
    <property type="project" value="UniProtKB-SubCell"/>
</dbReference>
<dbReference type="GO" id="GO:0030152">
    <property type="term" value="P:bacteriocin biosynthetic process"/>
    <property type="evidence" value="ECO:0007669"/>
    <property type="project" value="UniProtKB-KW"/>
</dbReference>
<dbReference type="GO" id="GO:0030153">
    <property type="term" value="P:bacteriocin immunity"/>
    <property type="evidence" value="ECO:0007669"/>
    <property type="project" value="UniProtKB-KW"/>
</dbReference>
<reference key="1">
    <citation type="submission" date="2002-02" db="EMBL/GenBank/DDBJ databases">
        <title>Subtilosin A biosynthesis is conserved among two different classes of Bacillus subtilis strains.</title>
        <authorList>
            <person name="Stein T."/>
            <person name="Duesterhus S."/>
            <person name="Entian K.-D."/>
        </authorList>
    </citation>
    <scope>NUCLEOTIDE SEQUENCE [GENOMIC DNA]</scope>
    <source>
        <strain>ATCC 6633 / PCI 219 / NRS 231</strain>
    </source>
</reference>
<gene>
    <name type="primary">albD</name>
</gene>
<protein>
    <recommendedName>
        <fullName>Antilisterial bacteriocin subtilosin biosynthesis protein AlbD</fullName>
    </recommendedName>
</protein>
<keyword id="KW-0045">Antibiotic biosynthesis</keyword>
<keyword id="KW-0871">Bacteriocin biosynthesis</keyword>
<keyword id="KW-0079">Bacteriocin immunity</keyword>
<keyword id="KW-1003">Cell membrane</keyword>
<keyword id="KW-0472">Membrane</keyword>
<keyword id="KW-0812">Transmembrane</keyword>
<keyword id="KW-1133">Transmembrane helix</keyword>
<name>ALBD_BACIU</name>
<sequence length="436" mass="49619">MNNIFPIMSLLFKQLYSRQGKKDAIRIAAGLVILAVFEIGLIRQAGIDESVLGKTYIILALLLMNTYMVFLSVTSQWKESYMKLSCLLPISSRSFWLAQSVVLFVDTCLRRTLFFFILPLFLFGNGTLSGAQTLFWLGRFSFFTVYSILFGVMLSNHFVKKKNSMFLLHAAVFAFVCLSAAFMPAVTIPLCAVHMLWAVIIDFPVFLQAPPHQSKMHFFMRRSEFSFYKREWNRFISSKAMLLNYVVMAAFSGFFSFQMMNTGIFNQQVIYIVISALLLICSPIALLYSIEKNDRMLLITLPIKRRTMFWAKYRFYSGLLAGGFLLVAIIVGFISGRPISALTFVQCMELLLAGAFIRLTADEKRPSFGWQTEQQLWSGFSKYRSYLFCLPLFLATLAGTAVSLAVIPIAALIIVYYLQKQDGGFFDTSKRERIGS</sequence>
<comment type="function">
    <text evidence="1">Involved in the production of the bacteriocin subtilosin. Required for immunity to subtilosin (By similarity).</text>
</comment>
<comment type="subcellular location">
    <subcellularLocation>
        <location evidence="3">Cell membrane</location>
        <topology evidence="3">Multi-pass membrane protein</topology>
    </subcellularLocation>
</comment>
<comment type="sequence caution" evidence="3">
    <conflict type="erroneous initiation">
        <sequence resource="EMBL-CDS" id="CAD23202"/>
    </conflict>
</comment>
<accession>Q8RKH4</accession>
<organism>
    <name type="scientific">Bacillus subtilis</name>
    <dbReference type="NCBI Taxonomy" id="1423"/>
    <lineage>
        <taxon>Bacteria</taxon>
        <taxon>Bacillati</taxon>
        <taxon>Bacillota</taxon>
        <taxon>Bacilli</taxon>
        <taxon>Bacillales</taxon>
        <taxon>Bacillaceae</taxon>
        <taxon>Bacillus</taxon>
    </lineage>
</organism>